<comment type="function">
    <text evidence="1">May act as a GTPase-activating protein for Rab family protein(s).</text>
</comment>
<accession>Q54VM3</accession>
<keyword id="KW-0175">Coiled coil</keyword>
<keyword id="KW-0903">Direct protein sequencing</keyword>
<keyword id="KW-0343">GTPase activation</keyword>
<keyword id="KW-1185">Reference proteome</keyword>
<evidence type="ECO:0000250" key="1"/>
<evidence type="ECO:0000255" key="2"/>
<evidence type="ECO:0000255" key="3">
    <source>
        <dbReference type="PROSITE-ProRule" id="PRU00163"/>
    </source>
</evidence>
<evidence type="ECO:0000256" key="4">
    <source>
        <dbReference type="SAM" id="MobiDB-lite"/>
    </source>
</evidence>
<protein>
    <recommendedName>
        <fullName>TBC1 domain family member 5 homolog A</fullName>
    </recommendedName>
</protein>
<name>TBC5A_DICDI</name>
<gene>
    <name type="primary">tbc1d5A</name>
    <name type="ORF">DDB_G0280253</name>
</gene>
<proteinExistence type="evidence at protein level"/>
<feature type="chain" id="PRO_0000388363" description="TBC1 domain family member 5 homolog A">
    <location>
        <begin position="1"/>
        <end position="1173"/>
    </location>
</feature>
<feature type="domain" description="Rab-GAP TBC" evidence="3">
    <location>
        <begin position="374"/>
        <end position="729"/>
    </location>
</feature>
<feature type="region of interest" description="Disordered" evidence="4">
    <location>
        <begin position="22"/>
        <end position="203"/>
    </location>
</feature>
<feature type="region of interest" description="Disordered" evidence="4">
    <location>
        <begin position="217"/>
        <end position="324"/>
    </location>
</feature>
<feature type="region of interest" description="Disordered" evidence="4">
    <location>
        <begin position="425"/>
        <end position="446"/>
    </location>
</feature>
<feature type="region of interest" description="Disordered" evidence="4">
    <location>
        <begin position="823"/>
        <end position="872"/>
    </location>
</feature>
<feature type="region of interest" description="Disordered" evidence="4">
    <location>
        <begin position="983"/>
        <end position="1015"/>
    </location>
</feature>
<feature type="region of interest" description="Disordered" evidence="4">
    <location>
        <begin position="1054"/>
        <end position="1089"/>
    </location>
</feature>
<feature type="coiled-coil region" evidence="2">
    <location>
        <begin position="163"/>
        <end position="214"/>
    </location>
</feature>
<feature type="coiled-coil region" evidence="2">
    <location>
        <begin position="885"/>
        <end position="930"/>
    </location>
</feature>
<feature type="compositionally biased region" description="Low complexity" evidence="4">
    <location>
        <begin position="26"/>
        <end position="107"/>
    </location>
</feature>
<feature type="compositionally biased region" description="Low complexity" evidence="4">
    <location>
        <begin position="127"/>
        <end position="203"/>
    </location>
</feature>
<feature type="compositionally biased region" description="Low complexity" evidence="4">
    <location>
        <begin position="217"/>
        <end position="290"/>
    </location>
</feature>
<feature type="compositionally biased region" description="Basic and acidic residues" evidence="4">
    <location>
        <begin position="299"/>
        <end position="313"/>
    </location>
</feature>
<feature type="compositionally biased region" description="Polar residues" evidence="4">
    <location>
        <begin position="314"/>
        <end position="324"/>
    </location>
</feature>
<feature type="compositionally biased region" description="Low complexity" evidence="4">
    <location>
        <begin position="431"/>
        <end position="441"/>
    </location>
</feature>
<feature type="compositionally biased region" description="Polar residues" evidence="4">
    <location>
        <begin position="983"/>
        <end position="994"/>
    </location>
</feature>
<feature type="compositionally biased region" description="Low complexity" evidence="4">
    <location>
        <begin position="995"/>
        <end position="1015"/>
    </location>
</feature>
<feature type="compositionally biased region" description="Low complexity" evidence="4">
    <location>
        <begin position="1054"/>
        <end position="1078"/>
    </location>
</feature>
<feature type="compositionally biased region" description="Polar residues" evidence="4">
    <location>
        <begin position="1079"/>
        <end position="1089"/>
    </location>
</feature>
<dbReference type="EMBL" id="AAFI02000035">
    <property type="protein sequence ID" value="EAL67353.1"/>
    <property type="molecule type" value="Genomic_DNA"/>
</dbReference>
<dbReference type="RefSeq" id="XP_641332.1">
    <property type="nucleotide sequence ID" value="XM_636240.1"/>
</dbReference>
<dbReference type="FunCoup" id="Q54VM3">
    <property type="interactions" value="744"/>
</dbReference>
<dbReference type="STRING" id="44689.Q54VM3"/>
<dbReference type="PaxDb" id="44689-DDB0235314"/>
<dbReference type="EnsemblProtists" id="EAL67353">
    <property type="protein sequence ID" value="EAL67353"/>
    <property type="gene ID" value="DDB_G0280253"/>
</dbReference>
<dbReference type="GeneID" id="8622466"/>
<dbReference type="KEGG" id="ddi:DDB_G0280253"/>
<dbReference type="dictyBase" id="DDB_G0280253"/>
<dbReference type="VEuPathDB" id="AmoebaDB:DDB_G0280253"/>
<dbReference type="eggNOG" id="KOG1091">
    <property type="taxonomic scope" value="Eukaryota"/>
</dbReference>
<dbReference type="HOGENOM" id="CLU_273905_0_0_1"/>
<dbReference type="InParanoid" id="Q54VM3"/>
<dbReference type="OMA" id="RDYSECL"/>
<dbReference type="PRO" id="PR:Q54VM3"/>
<dbReference type="Proteomes" id="UP000002195">
    <property type="component" value="Chromosome 3"/>
</dbReference>
<dbReference type="GO" id="GO:0005096">
    <property type="term" value="F:GTPase activator activity"/>
    <property type="evidence" value="ECO:0007669"/>
    <property type="project" value="UniProtKB-KW"/>
</dbReference>
<dbReference type="FunFam" id="1.10.472.80:FF:000048">
    <property type="entry name" value="TBC domain containing protein"/>
    <property type="match status" value="1"/>
</dbReference>
<dbReference type="FunFam" id="1.10.8.270:FF:000011">
    <property type="entry name" value="TBC1 domain family member 5"/>
    <property type="match status" value="1"/>
</dbReference>
<dbReference type="Gene3D" id="1.10.8.270">
    <property type="entry name" value="putative rabgap domain of human tbc1 domain family member 14 like domains"/>
    <property type="match status" value="1"/>
</dbReference>
<dbReference type="Gene3D" id="1.10.472.80">
    <property type="entry name" value="Ypt/Rab-GAP domain of gyp1p, domain 3"/>
    <property type="match status" value="1"/>
</dbReference>
<dbReference type="InterPro" id="IPR000195">
    <property type="entry name" value="Rab-GAP-TBC_dom"/>
</dbReference>
<dbReference type="InterPro" id="IPR035969">
    <property type="entry name" value="Rab-GAP_TBC_sf"/>
</dbReference>
<dbReference type="PANTHER" id="PTHR22957:SF337">
    <property type="entry name" value="TBC1 DOMAIN FAMILY MEMBER 5"/>
    <property type="match status" value="1"/>
</dbReference>
<dbReference type="PANTHER" id="PTHR22957">
    <property type="entry name" value="TBC1 DOMAIN FAMILY MEMBER GTPASE-ACTIVATING PROTEIN"/>
    <property type="match status" value="1"/>
</dbReference>
<dbReference type="Pfam" id="PF00566">
    <property type="entry name" value="RabGAP-TBC"/>
    <property type="match status" value="2"/>
</dbReference>
<dbReference type="SMART" id="SM00164">
    <property type="entry name" value="TBC"/>
    <property type="match status" value="1"/>
</dbReference>
<dbReference type="SUPFAM" id="SSF47923">
    <property type="entry name" value="Ypt/Rab-GAP domain of gyp1p"/>
    <property type="match status" value="2"/>
</dbReference>
<dbReference type="PROSITE" id="PS50086">
    <property type="entry name" value="TBC_RABGAP"/>
    <property type="match status" value="1"/>
</dbReference>
<sequence>MEDNDISFSIFGNSDDILDNTKKSKSNINNSGSSIFGNGNENNNNMNTNNNNSNQNNNDINYNNNNNNNNNNNSNNSNNSNNNNNNINNNNNRNNNNFNNNNNNNVNYFEQDVDFGENAHSSNYGDNNNIFSDESNNYNNNNNNNDYNNNNYYDNNNYNENYNENYNENYNNNNNNNNNNNNNNNNNNNNNNNNNNNNNYYNENNNQQQLQQNYSNNNYNNEYINNFNNNDNSYNNNNNNNNNNSNFNNYNNNNNGYDNSYSNSNNNNYYDNSNNNSKNDNQYNQQQQYYQEEEQQQQQHEEFEKEIEQKEQDSSPINVNRNPNNSVMIKIGEVEVPEDIYNQKVEKWRNDFNSIFRNLETLEIDYTKATFGLPKDTTVRSIFWRIALGTLSKDPTTWVERTNSSRKKYETFKKNYIINPRNSKDQDADLQQQQQQQQQQQRKPVSLIDDPLSQSEDSLWNQFFDNENAQREISHDISRTYPGLGFFERLDIQDIMIRILFIFSKQYPKIKYLQGMNEILAPILYSVYNDSHWFNNRDVFSKKNYDKKNKQYEHFDFVFDQQYQQDYYPDGPIQYPTNSNNFNGAGSSGSGGSVSRKDGGIGAFLRDPQYFEHDSYFIFESLMTIVGKWFTSPPSSPQPPPRVQGQFKKLYDLSERDASDQAVNIVVVDQCLRMFEDLKFIEPQLYSYLKQDLGIEPHLYSLRWIRIILAQVFPLDSLLILWDSIFKESVTEFLPYICLTMLIMIKDQIIEKDYSECLQVLFHYPVTQDMPMLLNTAYSVREKIQMAKQQYNIPISTPVSTPLPTSLSRRSIKAYPVSTSSTIVNQSTTTNSSSSSTTTSTTSANRGLSHSSQSYRSSSGSGSGSISNQNKGNGQSGIFSSFTSTFKQIINDLNEYNEEFQLAKENEQLKQQKSKLQKEVDTLKETQTHVISRLERILFSFVDFKQKHIHDQDNFESVDAMEKEVTSILNEVLNSQTTIANLNNSKNRLPNKSVQQSTISQQSTTPQQSITQQTSSPNIVLKQQQPITVISQQQQSQQQQSLQQEQQQSTQQQQSTQQEQQSTQQEQQQSTQPQQSQQNNDNSPFQQYNNDNRQEKISLEDEVFFDNQFVSVQSTNKEFQLKTLSLPNVEIHEDDLVEVKTHDSTVDEDEDGNPITEQYNYKQQLEARWGFNK</sequence>
<reference key="1">
    <citation type="journal article" date="2005" name="Nature">
        <title>The genome of the social amoeba Dictyostelium discoideum.</title>
        <authorList>
            <person name="Eichinger L."/>
            <person name="Pachebat J.A."/>
            <person name="Gloeckner G."/>
            <person name="Rajandream M.A."/>
            <person name="Sucgang R."/>
            <person name="Berriman M."/>
            <person name="Song J."/>
            <person name="Olsen R."/>
            <person name="Szafranski K."/>
            <person name="Xu Q."/>
            <person name="Tunggal B."/>
            <person name="Kummerfeld S."/>
            <person name="Madera M."/>
            <person name="Konfortov B.A."/>
            <person name="Rivero F."/>
            <person name="Bankier A.T."/>
            <person name="Lehmann R."/>
            <person name="Hamlin N."/>
            <person name="Davies R."/>
            <person name="Gaudet P."/>
            <person name="Fey P."/>
            <person name="Pilcher K."/>
            <person name="Chen G."/>
            <person name="Saunders D."/>
            <person name="Sodergren E.J."/>
            <person name="Davis P."/>
            <person name="Kerhornou A."/>
            <person name="Nie X."/>
            <person name="Hall N."/>
            <person name="Anjard C."/>
            <person name="Hemphill L."/>
            <person name="Bason N."/>
            <person name="Farbrother P."/>
            <person name="Desany B."/>
            <person name="Just E."/>
            <person name="Morio T."/>
            <person name="Rost R."/>
            <person name="Churcher C.M."/>
            <person name="Cooper J."/>
            <person name="Haydock S."/>
            <person name="van Driessche N."/>
            <person name="Cronin A."/>
            <person name="Goodhead I."/>
            <person name="Muzny D.M."/>
            <person name="Mourier T."/>
            <person name="Pain A."/>
            <person name="Lu M."/>
            <person name="Harper D."/>
            <person name="Lindsay R."/>
            <person name="Hauser H."/>
            <person name="James K.D."/>
            <person name="Quiles M."/>
            <person name="Madan Babu M."/>
            <person name="Saito T."/>
            <person name="Buchrieser C."/>
            <person name="Wardroper A."/>
            <person name="Felder M."/>
            <person name="Thangavelu M."/>
            <person name="Johnson D."/>
            <person name="Knights A."/>
            <person name="Loulseged H."/>
            <person name="Mungall K.L."/>
            <person name="Oliver K."/>
            <person name="Price C."/>
            <person name="Quail M.A."/>
            <person name="Urushihara H."/>
            <person name="Hernandez J."/>
            <person name="Rabbinowitsch E."/>
            <person name="Steffen D."/>
            <person name="Sanders M."/>
            <person name="Ma J."/>
            <person name="Kohara Y."/>
            <person name="Sharp S."/>
            <person name="Simmonds M.N."/>
            <person name="Spiegler S."/>
            <person name="Tivey A."/>
            <person name="Sugano S."/>
            <person name="White B."/>
            <person name="Walker D."/>
            <person name="Woodward J.R."/>
            <person name="Winckler T."/>
            <person name="Tanaka Y."/>
            <person name="Shaulsky G."/>
            <person name="Schleicher M."/>
            <person name="Weinstock G.M."/>
            <person name="Rosenthal A."/>
            <person name="Cox E.C."/>
            <person name="Chisholm R.L."/>
            <person name="Gibbs R.A."/>
            <person name="Loomis W.F."/>
            <person name="Platzer M."/>
            <person name="Kay R.R."/>
            <person name="Williams J.G."/>
            <person name="Dear P.H."/>
            <person name="Noegel A.A."/>
            <person name="Barrell B.G."/>
            <person name="Kuspa A."/>
        </authorList>
    </citation>
    <scope>NUCLEOTIDE SEQUENCE [LARGE SCALE GENOMIC DNA]</scope>
    <source>
        <strain>AX4</strain>
    </source>
</reference>
<reference key="2">
    <citation type="submission" date="2008-10" db="UniProtKB">
        <authorList>
            <person name="Bienvenut W.V."/>
            <person name="Sumpton D."/>
            <person name="Ura S."/>
            <person name="Insall R.H."/>
        </authorList>
    </citation>
    <scope>PROTEIN SEQUENCE OF 331-347; 358-368 AND 937-945</scope>
    <scope>IDENTIFICATION BY MASS SPECTROMETRY</scope>
    <source>
        <strain>AX2</strain>
    </source>
</reference>
<organism>
    <name type="scientific">Dictyostelium discoideum</name>
    <name type="common">Social amoeba</name>
    <dbReference type="NCBI Taxonomy" id="44689"/>
    <lineage>
        <taxon>Eukaryota</taxon>
        <taxon>Amoebozoa</taxon>
        <taxon>Evosea</taxon>
        <taxon>Eumycetozoa</taxon>
        <taxon>Dictyostelia</taxon>
        <taxon>Dictyosteliales</taxon>
        <taxon>Dictyosteliaceae</taxon>
        <taxon>Dictyostelium</taxon>
    </lineage>
</organism>